<comment type="function">
    <text evidence="1">Condenses 4-methyl-5-(beta-hydroxyethyl)thiazole monophosphate (THZ-P) and 2-methyl-4-amino-5-hydroxymethyl pyrimidine pyrophosphate (HMP-PP) to form thiamine monophosphate (TMP).</text>
</comment>
<comment type="catalytic activity">
    <reaction evidence="1">
        <text>2-[(2R,5Z)-2-carboxy-4-methylthiazol-5(2H)-ylidene]ethyl phosphate + 4-amino-2-methyl-5-(diphosphooxymethyl)pyrimidine + 2 H(+) = thiamine phosphate + CO2 + diphosphate</text>
        <dbReference type="Rhea" id="RHEA:47844"/>
        <dbReference type="ChEBI" id="CHEBI:15378"/>
        <dbReference type="ChEBI" id="CHEBI:16526"/>
        <dbReference type="ChEBI" id="CHEBI:33019"/>
        <dbReference type="ChEBI" id="CHEBI:37575"/>
        <dbReference type="ChEBI" id="CHEBI:57841"/>
        <dbReference type="ChEBI" id="CHEBI:62899"/>
        <dbReference type="EC" id="2.5.1.3"/>
    </reaction>
</comment>
<comment type="catalytic activity">
    <reaction evidence="1">
        <text>2-(2-carboxy-4-methylthiazol-5-yl)ethyl phosphate + 4-amino-2-methyl-5-(diphosphooxymethyl)pyrimidine + 2 H(+) = thiamine phosphate + CO2 + diphosphate</text>
        <dbReference type="Rhea" id="RHEA:47848"/>
        <dbReference type="ChEBI" id="CHEBI:15378"/>
        <dbReference type="ChEBI" id="CHEBI:16526"/>
        <dbReference type="ChEBI" id="CHEBI:33019"/>
        <dbReference type="ChEBI" id="CHEBI:37575"/>
        <dbReference type="ChEBI" id="CHEBI:57841"/>
        <dbReference type="ChEBI" id="CHEBI:62890"/>
        <dbReference type="EC" id="2.5.1.3"/>
    </reaction>
</comment>
<comment type="catalytic activity">
    <reaction evidence="1">
        <text>4-methyl-5-(2-phosphooxyethyl)-thiazole + 4-amino-2-methyl-5-(diphosphooxymethyl)pyrimidine + H(+) = thiamine phosphate + diphosphate</text>
        <dbReference type="Rhea" id="RHEA:22328"/>
        <dbReference type="ChEBI" id="CHEBI:15378"/>
        <dbReference type="ChEBI" id="CHEBI:33019"/>
        <dbReference type="ChEBI" id="CHEBI:37575"/>
        <dbReference type="ChEBI" id="CHEBI:57841"/>
        <dbReference type="ChEBI" id="CHEBI:58296"/>
        <dbReference type="EC" id="2.5.1.3"/>
    </reaction>
</comment>
<comment type="cofactor">
    <cofactor evidence="1">
        <name>Mg(2+)</name>
        <dbReference type="ChEBI" id="CHEBI:18420"/>
    </cofactor>
    <text evidence="1">Binds 1 Mg(2+) ion per subunit.</text>
</comment>
<comment type="pathway">
    <text evidence="1">Cofactor biosynthesis; thiamine diphosphate biosynthesis; thiamine phosphate from 4-amino-2-methyl-5-diphosphomethylpyrimidine and 4-methyl-5-(2-phosphoethyl)-thiazole: step 1/1.</text>
</comment>
<comment type="similarity">
    <text evidence="1">Belongs to the thiamine-phosphate synthase family.</text>
</comment>
<protein>
    <recommendedName>
        <fullName evidence="1">Thiamine-phosphate synthase</fullName>
        <shortName evidence="1">TP synthase</shortName>
        <shortName evidence="1">TPS</shortName>
        <ecNumber evidence="1">2.5.1.3</ecNumber>
    </recommendedName>
    <alternativeName>
        <fullName evidence="1">Thiamine-phosphate pyrophosphorylase</fullName>
        <shortName evidence="1">TMP pyrophosphorylase</shortName>
        <shortName evidence="1">TMP-PPase</shortName>
    </alternativeName>
</protein>
<accession>C1DMY6</accession>
<evidence type="ECO:0000255" key="1">
    <source>
        <dbReference type="HAMAP-Rule" id="MF_00097"/>
    </source>
</evidence>
<gene>
    <name evidence="1" type="primary">thiE</name>
    <name type="ordered locus">Avin_09270</name>
</gene>
<name>THIE_AZOVD</name>
<proteinExistence type="inferred from homology"/>
<feature type="chain" id="PRO_1000202747" description="Thiamine-phosphate synthase">
    <location>
        <begin position="1"/>
        <end position="209"/>
    </location>
</feature>
<feature type="binding site" evidence="1">
    <location>
        <begin position="36"/>
        <end position="40"/>
    </location>
    <ligand>
        <name>4-amino-2-methyl-5-(diphosphooxymethyl)pyrimidine</name>
        <dbReference type="ChEBI" id="CHEBI:57841"/>
    </ligand>
</feature>
<feature type="binding site" evidence="1">
    <location>
        <position position="68"/>
    </location>
    <ligand>
        <name>4-amino-2-methyl-5-(diphosphooxymethyl)pyrimidine</name>
        <dbReference type="ChEBI" id="CHEBI:57841"/>
    </ligand>
</feature>
<feature type="binding site" evidence="1">
    <location>
        <position position="69"/>
    </location>
    <ligand>
        <name>Mg(2+)</name>
        <dbReference type="ChEBI" id="CHEBI:18420"/>
    </ligand>
</feature>
<feature type="binding site" evidence="1">
    <location>
        <position position="87"/>
    </location>
    <ligand>
        <name>Mg(2+)</name>
        <dbReference type="ChEBI" id="CHEBI:18420"/>
    </ligand>
</feature>
<feature type="binding site" evidence="1">
    <location>
        <position position="106"/>
    </location>
    <ligand>
        <name>4-amino-2-methyl-5-(diphosphooxymethyl)pyrimidine</name>
        <dbReference type="ChEBI" id="CHEBI:57841"/>
    </ligand>
</feature>
<feature type="binding site" evidence="1">
    <location>
        <begin position="133"/>
        <end position="135"/>
    </location>
    <ligand>
        <name>2-[(2R,5Z)-2-carboxy-4-methylthiazol-5(2H)-ylidene]ethyl phosphate</name>
        <dbReference type="ChEBI" id="CHEBI:62899"/>
    </ligand>
</feature>
<feature type="binding site" evidence="1">
    <location>
        <position position="136"/>
    </location>
    <ligand>
        <name>4-amino-2-methyl-5-(diphosphooxymethyl)pyrimidine</name>
        <dbReference type="ChEBI" id="CHEBI:57841"/>
    </ligand>
</feature>
<feature type="binding site" evidence="1">
    <location>
        <position position="163"/>
    </location>
    <ligand>
        <name>2-[(2R,5Z)-2-carboxy-4-methylthiazol-5(2H)-ylidene]ethyl phosphate</name>
        <dbReference type="ChEBI" id="CHEBI:62899"/>
    </ligand>
</feature>
<organism>
    <name type="scientific">Azotobacter vinelandii (strain DJ / ATCC BAA-1303)</name>
    <dbReference type="NCBI Taxonomy" id="322710"/>
    <lineage>
        <taxon>Bacteria</taxon>
        <taxon>Pseudomonadati</taxon>
        <taxon>Pseudomonadota</taxon>
        <taxon>Gammaproteobacteria</taxon>
        <taxon>Pseudomonadales</taxon>
        <taxon>Pseudomonadaceae</taxon>
        <taxon>Azotobacter</taxon>
    </lineage>
</organism>
<keyword id="KW-0460">Magnesium</keyword>
<keyword id="KW-0479">Metal-binding</keyword>
<keyword id="KW-0784">Thiamine biosynthesis</keyword>
<keyword id="KW-0808">Transferase</keyword>
<sequence>MKLRGLYAITDSRLLADGRLLPYVEAALRGGARLLQYRDKSDEDARRLREAEALRDLCLRYGAQLIVNDDLELAARLGVGLHLGQQDGSLSAARALLGPKAIIGATCHGQLELAEQAAADGASYLAFGRFFDSSTKPGAPPASLELLERARARFPQPLVAIGGVTLDNAPELIRRGAAMIAVINALFAAANAAEVEQRARAFGQLFADT</sequence>
<reference key="1">
    <citation type="journal article" date="2009" name="J. Bacteriol.">
        <title>Genome sequence of Azotobacter vinelandii, an obligate aerobe specialized to support diverse anaerobic metabolic processes.</title>
        <authorList>
            <person name="Setubal J.C."/>
            <person name="Dos Santos P."/>
            <person name="Goldman B.S."/>
            <person name="Ertesvaag H."/>
            <person name="Espin G."/>
            <person name="Rubio L.M."/>
            <person name="Valla S."/>
            <person name="Almeida N.F."/>
            <person name="Balasubramanian D."/>
            <person name="Cromes L."/>
            <person name="Curatti L."/>
            <person name="Du Z."/>
            <person name="Godsy E."/>
            <person name="Goodner B."/>
            <person name="Hellner-Burris K."/>
            <person name="Hernandez J.A."/>
            <person name="Houmiel K."/>
            <person name="Imperial J."/>
            <person name="Kennedy C."/>
            <person name="Larson T.J."/>
            <person name="Latreille P."/>
            <person name="Ligon L.S."/>
            <person name="Lu J."/>
            <person name="Maerk M."/>
            <person name="Miller N.M."/>
            <person name="Norton S."/>
            <person name="O'Carroll I.P."/>
            <person name="Paulsen I."/>
            <person name="Raulfs E.C."/>
            <person name="Roemer R."/>
            <person name="Rosser J."/>
            <person name="Segura D."/>
            <person name="Slater S."/>
            <person name="Stricklin S.L."/>
            <person name="Studholme D.J."/>
            <person name="Sun J."/>
            <person name="Viana C.J."/>
            <person name="Wallin E."/>
            <person name="Wang B."/>
            <person name="Wheeler C."/>
            <person name="Zhu H."/>
            <person name="Dean D.R."/>
            <person name="Dixon R."/>
            <person name="Wood D."/>
        </authorList>
    </citation>
    <scope>NUCLEOTIDE SEQUENCE [LARGE SCALE GENOMIC DNA]</scope>
    <source>
        <strain>DJ / ATCC BAA-1303</strain>
    </source>
</reference>
<dbReference type="EC" id="2.5.1.3" evidence="1"/>
<dbReference type="EMBL" id="CP001157">
    <property type="protein sequence ID" value="ACO77166.1"/>
    <property type="molecule type" value="Genomic_DNA"/>
</dbReference>
<dbReference type="RefSeq" id="WP_012699591.1">
    <property type="nucleotide sequence ID" value="NC_012560.1"/>
</dbReference>
<dbReference type="SMR" id="C1DMY6"/>
<dbReference type="STRING" id="322710.Avin_09270"/>
<dbReference type="EnsemblBacteria" id="ACO77166">
    <property type="protein sequence ID" value="ACO77166"/>
    <property type="gene ID" value="Avin_09270"/>
</dbReference>
<dbReference type="GeneID" id="88184295"/>
<dbReference type="KEGG" id="avn:Avin_09270"/>
<dbReference type="eggNOG" id="COG0352">
    <property type="taxonomic scope" value="Bacteria"/>
</dbReference>
<dbReference type="HOGENOM" id="CLU_018272_3_1_6"/>
<dbReference type="OrthoDB" id="9789949at2"/>
<dbReference type="UniPathway" id="UPA00060">
    <property type="reaction ID" value="UER00141"/>
</dbReference>
<dbReference type="Proteomes" id="UP000002424">
    <property type="component" value="Chromosome"/>
</dbReference>
<dbReference type="GO" id="GO:0005737">
    <property type="term" value="C:cytoplasm"/>
    <property type="evidence" value="ECO:0007669"/>
    <property type="project" value="TreeGrafter"/>
</dbReference>
<dbReference type="GO" id="GO:0000287">
    <property type="term" value="F:magnesium ion binding"/>
    <property type="evidence" value="ECO:0007669"/>
    <property type="project" value="UniProtKB-UniRule"/>
</dbReference>
<dbReference type="GO" id="GO:0004789">
    <property type="term" value="F:thiamine-phosphate diphosphorylase activity"/>
    <property type="evidence" value="ECO:0007669"/>
    <property type="project" value="UniProtKB-UniRule"/>
</dbReference>
<dbReference type="GO" id="GO:0009228">
    <property type="term" value="P:thiamine biosynthetic process"/>
    <property type="evidence" value="ECO:0007669"/>
    <property type="project" value="UniProtKB-KW"/>
</dbReference>
<dbReference type="GO" id="GO:0009229">
    <property type="term" value="P:thiamine diphosphate biosynthetic process"/>
    <property type="evidence" value="ECO:0007669"/>
    <property type="project" value="UniProtKB-UniRule"/>
</dbReference>
<dbReference type="CDD" id="cd00564">
    <property type="entry name" value="TMP_TenI"/>
    <property type="match status" value="1"/>
</dbReference>
<dbReference type="Gene3D" id="3.20.20.70">
    <property type="entry name" value="Aldolase class I"/>
    <property type="match status" value="1"/>
</dbReference>
<dbReference type="HAMAP" id="MF_00097">
    <property type="entry name" value="TMP_synthase"/>
    <property type="match status" value="1"/>
</dbReference>
<dbReference type="InterPro" id="IPR013785">
    <property type="entry name" value="Aldolase_TIM"/>
</dbReference>
<dbReference type="InterPro" id="IPR036206">
    <property type="entry name" value="ThiamineP_synth_sf"/>
</dbReference>
<dbReference type="InterPro" id="IPR022998">
    <property type="entry name" value="ThiamineP_synth_TenI"/>
</dbReference>
<dbReference type="InterPro" id="IPR034291">
    <property type="entry name" value="TMP_synthase"/>
</dbReference>
<dbReference type="NCBIfam" id="TIGR00693">
    <property type="entry name" value="thiE"/>
    <property type="match status" value="1"/>
</dbReference>
<dbReference type="PANTHER" id="PTHR20857">
    <property type="entry name" value="THIAMINE-PHOSPHATE PYROPHOSPHORYLASE"/>
    <property type="match status" value="1"/>
</dbReference>
<dbReference type="PANTHER" id="PTHR20857:SF15">
    <property type="entry name" value="THIAMINE-PHOSPHATE SYNTHASE"/>
    <property type="match status" value="1"/>
</dbReference>
<dbReference type="Pfam" id="PF02581">
    <property type="entry name" value="TMP-TENI"/>
    <property type="match status" value="1"/>
</dbReference>
<dbReference type="SUPFAM" id="SSF51391">
    <property type="entry name" value="Thiamin phosphate synthase"/>
    <property type="match status" value="1"/>
</dbReference>